<comment type="function">
    <text evidence="1">Cell wall formation. Catalyzes the transfer of a GlcNAc subunit on undecaprenyl-pyrophosphoryl-MurNAc-pentapeptide (lipid intermediate I) to form undecaprenyl-pyrophosphoryl-MurNAc-(pentapeptide)GlcNAc (lipid intermediate II).</text>
</comment>
<comment type="catalytic activity">
    <reaction evidence="1 4">
        <text>di-trans,octa-cis-undecaprenyl diphospho-N-acetyl-alpha-D-muramoyl-L-alanyl-D-glutamyl-meso-2,6-diaminopimeloyl-D-alanyl-D-alanine + UDP-N-acetyl-alpha-D-glucosamine = di-trans,octa-cis-undecaprenyl diphospho-[N-acetyl-alpha-D-glucosaminyl-(1-&gt;4)]-N-acetyl-alpha-D-muramoyl-L-alanyl-D-glutamyl-meso-2,6-diaminopimeloyl-D-alanyl-D-alanine + UDP + H(+)</text>
        <dbReference type="Rhea" id="RHEA:31227"/>
        <dbReference type="ChEBI" id="CHEBI:15378"/>
        <dbReference type="ChEBI" id="CHEBI:57705"/>
        <dbReference type="ChEBI" id="CHEBI:58223"/>
        <dbReference type="ChEBI" id="CHEBI:61387"/>
        <dbReference type="ChEBI" id="CHEBI:61388"/>
        <dbReference type="EC" id="2.4.1.227"/>
    </reaction>
</comment>
<comment type="pathway">
    <text evidence="1">Cell wall biogenesis; peptidoglycan biosynthesis.</text>
</comment>
<comment type="subcellular location">
    <subcellularLocation>
        <location evidence="1">Cell inner membrane</location>
        <topology evidence="1">Peripheral membrane protein</topology>
        <orientation evidence="1">Cytoplasmic side</orientation>
    </subcellularLocation>
</comment>
<comment type="similarity">
    <text evidence="1">Belongs to the glycosyltransferase 28 family. MurG subfamily.</text>
</comment>
<dbReference type="EC" id="2.4.1.227" evidence="1 4"/>
<dbReference type="EMBL" id="AE004091">
    <property type="protein sequence ID" value="AAG07800.1"/>
    <property type="molecule type" value="Genomic_DNA"/>
</dbReference>
<dbReference type="PIR" id="E83094">
    <property type="entry name" value="E83094"/>
</dbReference>
<dbReference type="RefSeq" id="NP_253102.1">
    <property type="nucleotide sequence ID" value="NC_002516.2"/>
</dbReference>
<dbReference type="RefSeq" id="WP_003103107.1">
    <property type="nucleotide sequence ID" value="NZ_QZGE01000004.1"/>
</dbReference>
<dbReference type="PDB" id="3S2U">
    <property type="method" value="X-ray"/>
    <property type="resolution" value="2.23 A"/>
    <property type="chains" value="A=1-357"/>
</dbReference>
<dbReference type="PDBsum" id="3S2U"/>
<dbReference type="SMR" id="Q9HW01"/>
<dbReference type="FunCoup" id="Q9HW01">
    <property type="interactions" value="349"/>
</dbReference>
<dbReference type="STRING" id="208964.PA4412"/>
<dbReference type="CAZy" id="GT28">
    <property type="family name" value="Glycosyltransferase Family 28"/>
</dbReference>
<dbReference type="PaxDb" id="208964-PA4412"/>
<dbReference type="DNASU" id="881264"/>
<dbReference type="GeneID" id="881264"/>
<dbReference type="KEGG" id="pae:PA4412"/>
<dbReference type="PATRIC" id="fig|208964.12.peg.4621"/>
<dbReference type="PseudoCAP" id="PA4412"/>
<dbReference type="HOGENOM" id="CLU_037404_2_0_6"/>
<dbReference type="InParanoid" id="Q9HW01"/>
<dbReference type="OrthoDB" id="9808936at2"/>
<dbReference type="PhylomeDB" id="Q9HW01"/>
<dbReference type="BioCyc" id="PAER208964:G1FZ6-4499-MONOMER"/>
<dbReference type="BRENDA" id="2.4.1.227">
    <property type="organism ID" value="5087"/>
</dbReference>
<dbReference type="UniPathway" id="UPA00219"/>
<dbReference type="EvolutionaryTrace" id="Q9HW01"/>
<dbReference type="Proteomes" id="UP000002438">
    <property type="component" value="Chromosome"/>
</dbReference>
<dbReference type="GO" id="GO:0005886">
    <property type="term" value="C:plasma membrane"/>
    <property type="evidence" value="ECO:0007669"/>
    <property type="project" value="UniProtKB-SubCell"/>
</dbReference>
<dbReference type="GO" id="GO:0051991">
    <property type="term" value="F:UDP-N-acetyl-D-glucosamine:N-acetylmuramoyl-L-alanyl-D-glutamyl-meso-2,6-diaminopimelyl-D-alanyl-D-alanine-diphosphoundecaprenol 4-beta-N-acetylglucosaminlytransferase activity"/>
    <property type="evidence" value="ECO:0007669"/>
    <property type="project" value="RHEA"/>
</dbReference>
<dbReference type="GO" id="GO:0050511">
    <property type="term" value="F:undecaprenyldiphospho-muramoylpentapeptide beta-N-acetylglucosaminyltransferase activity"/>
    <property type="evidence" value="ECO:0000318"/>
    <property type="project" value="GO_Central"/>
</dbReference>
<dbReference type="GO" id="GO:0005975">
    <property type="term" value="P:carbohydrate metabolic process"/>
    <property type="evidence" value="ECO:0007669"/>
    <property type="project" value="InterPro"/>
</dbReference>
<dbReference type="GO" id="GO:0051301">
    <property type="term" value="P:cell division"/>
    <property type="evidence" value="ECO:0007669"/>
    <property type="project" value="UniProtKB-KW"/>
</dbReference>
<dbReference type="GO" id="GO:0071555">
    <property type="term" value="P:cell wall organization"/>
    <property type="evidence" value="ECO:0007669"/>
    <property type="project" value="UniProtKB-KW"/>
</dbReference>
<dbReference type="GO" id="GO:0030259">
    <property type="term" value="P:lipid glycosylation"/>
    <property type="evidence" value="ECO:0007669"/>
    <property type="project" value="UniProtKB-UniRule"/>
</dbReference>
<dbReference type="GO" id="GO:0009252">
    <property type="term" value="P:peptidoglycan biosynthetic process"/>
    <property type="evidence" value="ECO:0007669"/>
    <property type="project" value="UniProtKB-UniRule"/>
</dbReference>
<dbReference type="GO" id="GO:0008360">
    <property type="term" value="P:regulation of cell shape"/>
    <property type="evidence" value="ECO:0007669"/>
    <property type="project" value="UniProtKB-KW"/>
</dbReference>
<dbReference type="CDD" id="cd03785">
    <property type="entry name" value="GT28_MurG"/>
    <property type="match status" value="1"/>
</dbReference>
<dbReference type="Gene3D" id="3.40.50.2000">
    <property type="entry name" value="Glycogen Phosphorylase B"/>
    <property type="match status" value="2"/>
</dbReference>
<dbReference type="HAMAP" id="MF_00033">
    <property type="entry name" value="MurG"/>
    <property type="match status" value="1"/>
</dbReference>
<dbReference type="InterPro" id="IPR006009">
    <property type="entry name" value="GlcNAc_MurG"/>
</dbReference>
<dbReference type="InterPro" id="IPR007235">
    <property type="entry name" value="Glyco_trans_28_C"/>
</dbReference>
<dbReference type="InterPro" id="IPR004276">
    <property type="entry name" value="GlycoTrans_28_N"/>
</dbReference>
<dbReference type="NCBIfam" id="TIGR01133">
    <property type="entry name" value="murG"/>
    <property type="match status" value="1"/>
</dbReference>
<dbReference type="PANTHER" id="PTHR21015:SF22">
    <property type="entry name" value="GLYCOSYLTRANSFERASE"/>
    <property type="match status" value="1"/>
</dbReference>
<dbReference type="PANTHER" id="PTHR21015">
    <property type="entry name" value="UDP-N-ACETYLGLUCOSAMINE--N-ACETYLMURAMYL-(PENTAPEPTIDE) PYROPHOSPHORYL-UNDECAPRENOL N-ACETYLGLUCOSAMINE TRANSFERASE 1"/>
    <property type="match status" value="1"/>
</dbReference>
<dbReference type="Pfam" id="PF04101">
    <property type="entry name" value="Glyco_tran_28_C"/>
    <property type="match status" value="1"/>
</dbReference>
<dbReference type="Pfam" id="PF03033">
    <property type="entry name" value="Glyco_transf_28"/>
    <property type="match status" value="1"/>
</dbReference>
<dbReference type="SUPFAM" id="SSF53756">
    <property type="entry name" value="UDP-Glycosyltransferase/glycogen phosphorylase"/>
    <property type="match status" value="1"/>
</dbReference>
<proteinExistence type="evidence at protein level"/>
<reference key="1">
    <citation type="journal article" date="2000" name="Nature">
        <title>Complete genome sequence of Pseudomonas aeruginosa PAO1, an opportunistic pathogen.</title>
        <authorList>
            <person name="Stover C.K."/>
            <person name="Pham X.-Q.T."/>
            <person name="Erwin A.L."/>
            <person name="Mizoguchi S.D."/>
            <person name="Warrener P."/>
            <person name="Hickey M.J."/>
            <person name="Brinkman F.S.L."/>
            <person name="Hufnagle W.O."/>
            <person name="Kowalik D.J."/>
            <person name="Lagrou M."/>
            <person name="Garber R.L."/>
            <person name="Goltry L."/>
            <person name="Tolentino E."/>
            <person name="Westbrock-Wadman S."/>
            <person name="Yuan Y."/>
            <person name="Brody L.L."/>
            <person name="Coulter S.N."/>
            <person name="Folger K.R."/>
            <person name="Kas A."/>
            <person name="Larbig K."/>
            <person name="Lim R.M."/>
            <person name="Smith K.A."/>
            <person name="Spencer D.H."/>
            <person name="Wong G.K.-S."/>
            <person name="Wu Z."/>
            <person name="Paulsen I.T."/>
            <person name="Reizer J."/>
            <person name="Saier M.H. Jr."/>
            <person name="Hancock R.E.W."/>
            <person name="Lory S."/>
            <person name="Olson M.V."/>
        </authorList>
    </citation>
    <scope>NUCLEOTIDE SEQUENCE [LARGE SCALE GENOMIC DNA]</scope>
    <source>
        <strain>ATCC 15692 / DSM 22644 / CIP 104116 / JCM 14847 / LMG 12228 / 1C / PRS 101 / PAO1</strain>
    </source>
</reference>
<reference evidence="5" key="2">
    <citation type="journal article" date="2013" name="Protein Pept. Lett.">
        <title>Crystal structure of the Pseudomonas aeruginosa MurG: UDP-GlcNAc substrate complex.</title>
        <authorList>
            <person name="Brown K."/>
            <person name="Vial S.C."/>
            <person name="Dedi N."/>
            <person name="Westcott J."/>
            <person name="Scally S."/>
            <person name="Bugg T.D."/>
            <person name="Charlton P.A."/>
            <person name="Cheetham G.M."/>
        </authorList>
    </citation>
    <scope>X-RAY CRYSTALLOGRAPHY (2.23 ANGSTROMS) IN COMPLEX WITH UDP-N-ACETYL-ALPHA-D-GLUCOSAMINE</scope>
    <scope>CATALYTIC ACTIVITY</scope>
</reference>
<gene>
    <name evidence="1 3" type="primary">murG</name>
    <name type="ordered locus">PA4412</name>
</gene>
<protein>
    <recommendedName>
        <fullName evidence="1">UDP-N-acetylglucosamine--N-acetylmuramyl-(pentapeptide) pyrophosphoryl-undecaprenol N-acetylglucosamine transferase</fullName>
        <ecNumber evidence="1 4">2.4.1.227</ecNumber>
    </recommendedName>
    <alternativeName>
        <fullName evidence="1">Undecaprenyl-PP-MurNAc-pentapeptide-UDPGlcNAc GlcNAc transferase</fullName>
    </alternativeName>
</protein>
<keyword id="KW-0002">3D-structure</keyword>
<keyword id="KW-0131">Cell cycle</keyword>
<keyword id="KW-0132">Cell division</keyword>
<keyword id="KW-0997">Cell inner membrane</keyword>
<keyword id="KW-1003">Cell membrane</keyword>
<keyword id="KW-0133">Cell shape</keyword>
<keyword id="KW-0961">Cell wall biogenesis/degradation</keyword>
<keyword id="KW-0328">Glycosyltransferase</keyword>
<keyword id="KW-0472">Membrane</keyword>
<keyword id="KW-0573">Peptidoglycan synthesis</keyword>
<keyword id="KW-1185">Reference proteome</keyword>
<keyword id="KW-0808">Transferase</keyword>
<sequence>MKGNVLIMAGGTGGHVFPALACAREFQARGYAVHWLGTPRGIENDLVPKAGLPLHLIQVSGLRGKGLKSLVKAPLELLKSLFQALRVIRQLRPVCVLGLGGYVTGPGGLAARLNGVPLVIHEQNAVAGTANRSLAPIARRVCEAFPDTFPASDKRLTTGNPVRGELFLDAHARAPLTGRRVNLLVLGGSLGAEPLNKLLPEALAQVPLEIRPAIRHQAGRQHAEITAERYRTVAVEADVAPFISDMAAAYAWADLVICRAGALTVSELTAAGLPAFLVPLPHAIDDHQTRNAEFLVRSGAGRLLPQKSTGAAELAAQLSEVLMHPETLRSMADQARSLAKPEATRTVVDACLEVARG</sequence>
<evidence type="ECO:0000255" key="1">
    <source>
        <dbReference type="HAMAP-Rule" id="MF_00033"/>
    </source>
</evidence>
<evidence type="ECO:0000269" key="2">
    <source>
    </source>
</evidence>
<evidence type="ECO:0000303" key="3">
    <source>
    </source>
</evidence>
<evidence type="ECO:0000305" key="4">
    <source>
    </source>
</evidence>
<evidence type="ECO:0007744" key="5">
    <source>
        <dbReference type="PDB" id="3S2U"/>
    </source>
</evidence>
<evidence type="ECO:0007829" key="6">
    <source>
        <dbReference type="PDB" id="3S2U"/>
    </source>
</evidence>
<accession>Q9HW01</accession>
<feature type="chain" id="PRO_0000109197" description="UDP-N-acetylglucosamine--N-acetylmuramyl-(pentapeptide) pyrophosphoryl-undecaprenol N-acetylglucosamine transferase">
    <location>
        <begin position="1"/>
        <end position="357"/>
    </location>
</feature>
<feature type="binding site" evidence="1 2 5">
    <location>
        <begin position="12"/>
        <end position="14"/>
    </location>
    <ligand>
        <name>UDP-N-acetyl-alpha-D-glucosamine</name>
        <dbReference type="ChEBI" id="CHEBI:57705"/>
    </ligand>
</feature>
<feature type="binding site" evidence="1 2 5">
    <location>
        <position position="124"/>
    </location>
    <ligand>
        <name>UDP-N-acetyl-alpha-D-glucosamine</name>
        <dbReference type="ChEBI" id="CHEBI:57705"/>
    </ligand>
</feature>
<feature type="binding site" evidence="1 2 5">
    <location>
        <position position="163"/>
    </location>
    <ligand>
        <name>UDP-N-acetyl-alpha-D-glucosamine</name>
        <dbReference type="ChEBI" id="CHEBI:57705"/>
    </ligand>
</feature>
<feature type="binding site" evidence="1 2 5">
    <location>
        <position position="189"/>
    </location>
    <ligand>
        <name>UDP-N-acetyl-alpha-D-glucosamine</name>
        <dbReference type="ChEBI" id="CHEBI:57705"/>
    </ligand>
</feature>
<feature type="binding site" evidence="1 2 5">
    <location>
        <position position="243"/>
    </location>
    <ligand>
        <name>UDP-N-acetyl-alpha-D-glucosamine</name>
        <dbReference type="ChEBI" id="CHEBI:57705"/>
    </ligand>
</feature>
<feature type="binding site" evidence="1 2 5">
    <location>
        <begin position="262"/>
        <end position="267"/>
    </location>
    <ligand>
        <name>UDP-N-acetyl-alpha-D-glucosamine</name>
        <dbReference type="ChEBI" id="CHEBI:57705"/>
    </ligand>
</feature>
<feature type="binding site" evidence="1 2 5">
    <location>
        <position position="288"/>
    </location>
    <ligand>
        <name>UDP-N-acetyl-alpha-D-glucosamine</name>
        <dbReference type="ChEBI" id="CHEBI:57705"/>
    </ligand>
</feature>
<feature type="strand" evidence="6">
    <location>
        <begin position="4"/>
        <end position="8"/>
    </location>
</feature>
<feature type="helix" evidence="6">
    <location>
        <begin position="13"/>
        <end position="28"/>
    </location>
</feature>
<feature type="strand" evidence="6">
    <location>
        <begin position="32"/>
        <end position="37"/>
    </location>
</feature>
<feature type="strand" evidence="6">
    <location>
        <begin position="39"/>
        <end position="41"/>
    </location>
</feature>
<feature type="helix" evidence="6">
    <location>
        <begin position="43"/>
        <end position="46"/>
    </location>
</feature>
<feature type="helix" evidence="6">
    <location>
        <begin position="48"/>
        <end position="50"/>
    </location>
</feature>
<feature type="strand" evidence="6">
    <location>
        <begin position="54"/>
        <end position="56"/>
    </location>
</feature>
<feature type="helix" evidence="6">
    <location>
        <begin position="74"/>
        <end position="91"/>
    </location>
</feature>
<feature type="strand" evidence="6">
    <location>
        <begin position="94"/>
        <end position="98"/>
    </location>
</feature>
<feature type="strand" evidence="6">
    <location>
        <begin position="100"/>
        <end position="102"/>
    </location>
</feature>
<feature type="helix" evidence="6">
    <location>
        <begin position="104"/>
        <end position="113"/>
    </location>
</feature>
<feature type="strand" evidence="6">
    <location>
        <begin position="118"/>
        <end position="122"/>
    </location>
</feature>
<feature type="strand" evidence="6">
    <location>
        <begin position="124"/>
        <end position="126"/>
    </location>
</feature>
<feature type="helix" evidence="6">
    <location>
        <begin position="129"/>
        <end position="134"/>
    </location>
</feature>
<feature type="helix" evidence="6">
    <location>
        <begin position="135"/>
        <end position="137"/>
    </location>
</feature>
<feature type="strand" evidence="6">
    <location>
        <begin position="139"/>
        <end position="145"/>
    </location>
</feature>
<feature type="helix" evidence="6">
    <location>
        <begin position="164"/>
        <end position="166"/>
    </location>
</feature>
<feature type="strand" evidence="6">
    <location>
        <begin position="182"/>
        <end position="185"/>
    </location>
</feature>
<feature type="turn" evidence="6">
    <location>
        <begin position="188"/>
        <end position="191"/>
    </location>
</feature>
<feature type="helix" evidence="6">
    <location>
        <begin position="194"/>
        <end position="204"/>
    </location>
</feature>
<feature type="turn" evidence="6">
    <location>
        <begin position="208"/>
        <end position="210"/>
    </location>
</feature>
<feature type="strand" evidence="6">
    <location>
        <begin position="213"/>
        <end position="217"/>
    </location>
</feature>
<feature type="turn" evidence="6">
    <location>
        <begin position="220"/>
        <end position="222"/>
    </location>
</feature>
<feature type="helix" evidence="6">
    <location>
        <begin position="223"/>
        <end position="232"/>
    </location>
</feature>
<feature type="strand" evidence="6">
    <location>
        <begin position="238"/>
        <end position="241"/>
    </location>
</feature>
<feature type="helix" evidence="6">
    <location>
        <begin position="246"/>
        <end position="252"/>
    </location>
</feature>
<feature type="strand" evidence="6">
    <location>
        <begin position="254"/>
        <end position="258"/>
    </location>
</feature>
<feature type="helix" evidence="6">
    <location>
        <begin position="262"/>
        <end position="271"/>
    </location>
</feature>
<feature type="strand" evidence="6">
    <location>
        <begin position="275"/>
        <end position="277"/>
    </location>
</feature>
<feature type="helix" evidence="6">
    <location>
        <begin position="287"/>
        <end position="296"/>
    </location>
</feature>
<feature type="turn" evidence="6">
    <location>
        <begin position="297"/>
        <end position="299"/>
    </location>
</feature>
<feature type="strand" evidence="6">
    <location>
        <begin position="300"/>
        <end position="303"/>
    </location>
</feature>
<feature type="turn" evidence="6">
    <location>
        <begin position="306"/>
        <end position="308"/>
    </location>
</feature>
<feature type="helix" evidence="6">
    <location>
        <begin position="311"/>
        <end position="323"/>
    </location>
</feature>
<feature type="helix" evidence="6">
    <location>
        <begin position="326"/>
        <end position="337"/>
    </location>
</feature>
<feature type="helix" evidence="6">
    <location>
        <begin position="343"/>
        <end position="354"/>
    </location>
</feature>
<organism>
    <name type="scientific">Pseudomonas aeruginosa (strain ATCC 15692 / DSM 22644 / CIP 104116 / JCM 14847 / LMG 12228 / 1C / PRS 101 / PAO1)</name>
    <dbReference type="NCBI Taxonomy" id="208964"/>
    <lineage>
        <taxon>Bacteria</taxon>
        <taxon>Pseudomonadati</taxon>
        <taxon>Pseudomonadota</taxon>
        <taxon>Gammaproteobacteria</taxon>
        <taxon>Pseudomonadales</taxon>
        <taxon>Pseudomonadaceae</taxon>
        <taxon>Pseudomonas</taxon>
    </lineage>
</organism>
<name>MURG_PSEAE</name>